<comment type="function">
    <text evidence="2">Gating-modifier toxin that inhibits voltage-gated sodium channel with a preference for hNav1.7/SCN9A (IC(50)=25.4 nM) over hNav1.1/SCN1A (IC(50)=4.1 uM), hNav1.2/SCN2A (IC(50)=813 nM), and hNav1.6/SCN8A (IC(50)=15.2 uM) (PubMed:24082113). Is an effective analgesic in rodent pain models, since it is several-fold more effective than morphine in a rodent model of formalin-induced pain and is equipotent with morphine in its ability to reduce thermal and acid-induced pain (PubMed:24082113). In addition, this peptide shows a high level of resistance to proteases and a high thermal stability that may be explained by its predominant composition of alpha-helices (PubMed:24082113).</text>
</comment>
<comment type="subcellular location">
    <subcellularLocation>
        <location evidence="2">Secreted</location>
    </subcellularLocation>
</comment>
<comment type="tissue specificity">
    <text evidence="7">Expressed by the venom gland.</text>
</comment>
<comment type="domain">
    <text evidence="4">Is exclusively composed of 4 tightly packed alpha helices (no beta strand is present).</text>
</comment>
<comment type="mass spectrometry"/>
<comment type="miscellaneous">
    <text evidence="2 3">Negative results: does not show effects on sodium channels hNav1.3/SCN3A, hNav1.4/SCN4A, hNav1.5/SCN5A, hNav1.8/SCN10A and potassium channel hKv11.1/KCNH2 (PubMed:24082113). The synthetic peptide has been found to be inactive against Nav1.7/SCN9A at concentrations up to 1 uM, in contrast to the isolated natural peptide described in PubMed:24082113 (PubMed:25658507). Intraperitoneal injection of this toxin has no effect on blood pressure, heart rate, or motor function (as judged by a swim test) at doses up to 1-10 umol/kg (PubMed:24082113).</text>
</comment>
<comment type="miscellaneous">
    <text evidence="8">Arose via modification of ancestral neuropeptide hormones (ion transport peptide/crustacean hyperglycemic hormones (ITP/CHH)).</text>
</comment>
<comment type="similarity">
    <text evidence="6">Belongs to the scoloptoxin-03 family.</text>
</comment>
<reference key="1">
    <citation type="journal article" date="2013" name="Proc. Natl. Acad. Sci. U.S.A.">
        <title>Discovery of a selective NaV1.7 inhibitor from centipede venom with analgesic efficacy exceeding morphine in rodent pain models.</title>
        <authorList>
            <person name="Yang S."/>
            <person name="Xiao Y."/>
            <person name="Kang D."/>
            <person name="Liu J."/>
            <person name="Li Y."/>
            <person name="Undheim E.A."/>
            <person name="Klint J.K."/>
            <person name="Rong M."/>
            <person name="Lai R."/>
            <person name="King G.F."/>
        </authorList>
    </citation>
    <scope>NUCLEOTIDE SEQUENCE [MRNA]</scope>
    <scope>PROTEIN SEQUENCE OF 66-87</scope>
    <scope>FUNCTION</scope>
    <scope>BIOASSAY</scope>
    <scope>DISULFIDE BONDS</scope>
    <scope>MASS SPECTROMETRY</scope>
    <scope>SUBCELLULAR LOCATION</scope>
    <scope>NOMENCLATURE</scope>
    <source>
        <tissue>Venom</tissue>
        <tissue>Venom gland</tissue>
    </source>
</reference>
<reference key="2">
    <citation type="journal article" date="2015" name="J. Med. Chem.">
        <title>Engineering potent and selective analogues of GpTx-1, a tarantula venom peptide antagonist of the Na(V)1.7 sodium channel.</title>
        <authorList>
            <person name="Murray J.K."/>
            <person name="Ligutti J."/>
            <person name="Liu D."/>
            <person name="Zou A."/>
            <person name="Poppe L."/>
            <person name="Li H."/>
            <person name="Andrews K.L."/>
            <person name="Moyer B.D."/>
            <person name="McDonough S.I."/>
            <person name="Favreau P."/>
            <person name="Stoecklin R."/>
            <person name="Miranda L.P."/>
        </authorList>
    </citation>
    <scope>FUNCTION</scope>
</reference>
<reference key="3">
    <citation type="journal article" date="2015" name="Structure">
        <title>Weaponization of a hormone: convergent recruitment of hyperglycemic hormone into the venom of arthropod predators.</title>
        <authorList>
            <person name="Undheim E.A."/>
            <person name="Grimm L.L."/>
            <person name="Low C.F."/>
            <person name="Morgenstern D."/>
            <person name="Herzig V."/>
            <person name="Zobel-Thropp P."/>
            <person name="Pineda S.S."/>
            <person name="Habib R."/>
            <person name="Dziemborowicz S."/>
            <person name="Fry B.G."/>
            <person name="Nicholson G.M."/>
            <person name="Binford G.J."/>
            <person name="Mobli M."/>
            <person name="King G.F."/>
        </authorList>
    </citation>
    <scope>STRUCTURE BY NMR OF 66-111</scope>
    <scope>DISULFIDE BOND</scope>
</reference>
<proteinExistence type="evidence at protein level"/>
<name>TX32A_SCOMU</name>
<dbReference type="PDB" id="2MUN">
    <property type="method" value="NMR"/>
    <property type="chains" value="A=66-111"/>
</dbReference>
<dbReference type="PDB" id="2MZ4">
    <property type="method" value="NMR"/>
    <property type="chains" value="A=66-111"/>
</dbReference>
<dbReference type="PDBsum" id="2MUN"/>
<dbReference type="PDBsum" id="2MZ4"/>
<dbReference type="BMRB" id="P0DL36"/>
<dbReference type="SMR" id="P0DL36"/>
<dbReference type="TCDB" id="8.B.26.1.4">
    <property type="family name" value="the scorpion toxin, scoloptoxin (scoloptoxin) family"/>
</dbReference>
<dbReference type="EvolutionaryTrace" id="P0DL36"/>
<dbReference type="GO" id="GO:0005576">
    <property type="term" value="C:extracellular region"/>
    <property type="evidence" value="ECO:0007669"/>
    <property type="project" value="UniProtKB-SubCell"/>
</dbReference>
<dbReference type="GO" id="GO:0017080">
    <property type="term" value="F:sodium channel regulator activity"/>
    <property type="evidence" value="ECO:0007669"/>
    <property type="project" value="UniProtKB-KW"/>
</dbReference>
<dbReference type="GO" id="GO:0090729">
    <property type="term" value="F:toxin activity"/>
    <property type="evidence" value="ECO:0007669"/>
    <property type="project" value="UniProtKB-KW"/>
</dbReference>
<dbReference type="Gene3D" id="1.10.60.50">
    <property type="match status" value="1"/>
</dbReference>
<accession>P0DL36</accession>
<accession>C0HJF5</accession>
<feature type="signal peptide" evidence="1">
    <location>
        <begin position="1"/>
        <end position="21"/>
    </location>
</feature>
<feature type="propeptide" id="PRO_0000425498" evidence="7">
    <location>
        <begin position="22"/>
        <end position="65"/>
    </location>
</feature>
<feature type="peptide" id="PRO_0000425499" description="Mu-scoloptoxin(03)-Ssm2a" evidence="7">
    <location>
        <begin position="66"/>
        <end position="111"/>
    </location>
</feature>
<feature type="disulfide bond" evidence="2 4 9 10">
    <location>
        <begin position="70"/>
        <end position="97"/>
    </location>
</feature>
<feature type="disulfide bond" evidence="2 4 9 10">
    <location>
        <begin position="80"/>
        <end position="96"/>
    </location>
</feature>
<feature type="disulfide bond" evidence="2 4 9 10">
    <location>
        <begin position="83"/>
        <end position="106"/>
    </location>
</feature>
<feature type="helix" evidence="11">
    <location>
        <begin position="69"/>
        <end position="72"/>
    </location>
</feature>
<feature type="helix" evidence="11">
    <location>
        <begin position="74"/>
        <end position="86"/>
    </location>
</feature>
<feature type="helix" evidence="11">
    <location>
        <begin position="92"/>
        <end position="96"/>
    </location>
</feature>
<feature type="helix" evidence="11">
    <location>
        <begin position="100"/>
        <end position="110"/>
    </location>
</feature>
<keyword id="KW-0002">3D-structure</keyword>
<keyword id="KW-0903">Direct protein sequencing</keyword>
<keyword id="KW-1015">Disulfide bond</keyword>
<keyword id="KW-0872">Ion channel impairing toxin</keyword>
<keyword id="KW-0528">Neurotoxin</keyword>
<keyword id="KW-0964">Secreted</keyword>
<keyword id="KW-0732">Signal</keyword>
<keyword id="KW-0800">Toxin</keyword>
<keyword id="KW-0738">Voltage-gated sodium channel impairing toxin</keyword>
<protein>
    <recommendedName>
        <fullName evidence="5">Mu-scoloptoxin(03)-Ssm2a</fullName>
        <shortName evidence="5">Mu-SLPTX(03)-Ssm2a</shortName>
    </recommendedName>
    <alternativeName>
        <fullName evidence="5">Mu-scoloptoxin-Ssm6a</fullName>
        <shortName evidence="5">Mu-SLPTX-Ssm6a</shortName>
    </alternativeName>
</protein>
<sequence>MRIWSLTRILTFIVIFNFAEAGGECMKKCDSPDMIREIFTRCTMVKRDTQFSENSGHLIPKRSVVADNKCENSLRREIACGQCRDKVKTDGYFYECCTSDSTFKKCQDLLHK</sequence>
<evidence type="ECO:0000255" key="1"/>
<evidence type="ECO:0000269" key="2">
    <source>
    </source>
</evidence>
<evidence type="ECO:0000269" key="3">
    <source>
    </source>
</evidence>
<evidence type="ECO:0000269" key="4">
    <source>
    </source>
</evidence>
<evidence type="ECO:0000303" key="5">
    <source>
    </source>
</evidence>
<evidence type="ECO:0000305" key="6"/>
<evidence type="ECO:0000305" key="7">
    <source>
    </source>
</evidence>
<evidence type="ECO:0000305" key="8">
    <source>
    </source>
</evidence>
<evidence type="ECO:0000312" key="9">
    <source>
        <dbReference type="PDB" id="2MUN"/>
    </source>
</evidence>
<evidence type="ECO:0000312" key="10">
    <source>
        <dbReference type="PDB" id="2MZ4"/>
    </source>
</evidence>
<evidence type="ECO:0007829" key="11">
    <source>
        <dbReference type="PDB" id="2MUN"/>
    </source>
</evidence>
<organism>
    <name type="scientific">Scolopendra mutilans</name>
    <name type="common">Chinese red-headed centipede</name>
    <name type="synonym">Scolopendra subspinipes mutilans</name>
    <dbReference type="NCBI Taxonomy" id="2836329"/>
    <lineage>
        <taxon>Eukaryota</taxon>
        <taxon>Metazoa</taxon>
        <taxon>Ecdysozoa</taxon>
        <taxon>Arthropoda</taxon>
        <taxon>Myriapoda</taxon>
        <taxon>Chilopoda</taxon>
        <taxon>Pleurostigmophora</taxon>
        <taxon>Scolopendromorpha</taxon>
        <taxon>Scolopendridae</taxon>
        <taxon>Scolopendra</taxon>
    </lineage>
</organism>